<feature type="chain" id="PRO_1000057073" description="Endoribonuclease YbeY">
    <location>
        <begin position="1"/>
        <end position="179"/>
    </location>
</feature>
<feature type="binding site" evidence="1">
    <location>
        <position position="148"/>
    </location>
    <ligand>
        <name>Zn(2+)</name>
        <dbReference type="ChEBI" id="CHEBI:29105"/>
        <note>catalytic</note>
    </ligand>
</feature>
<feature type="binding site" evidence="1">
    <location>
        <position position="152"/>
    </location>
    <ligand>
        <name>Zn(2+)</name>
        <dbReference type="ChEBI" id="CHEBI:29105"/>
        <note>catalytic</note>
    </ligand>
</feature>
<feature type="binding site" evidence="1">
    <location>
        <position position="158"/>
    </location>
    <ligand>
        <name>Zn(2+)</name>
        <dbReference type="ChEBI" id="CHEBI:29105"/>
        <note>catalytic</note>
    </ligand>
</feature>
<proteinExistence type="inferred from homology"/>
<organism>
    <name type="scientific">Prochlorococcus marinus (strain MIT 9215)</name>
    <dbReference type="NCBI Taxonomy" id="93060"/>
    <lineage>
        <taxon>Bacteria</taxon>
        <taxon>Bacillati</taxon>
        <taxon>Cyanobacteriota</taxon>
        <taxon>Cyanophyceae</taxon>
        <taxon>Synechococcales</taxon>
        <taxon>Prochlorococcaceae</taxon>
        <taxon>Prochlorococcus</taxon>
    </lineage>
</organism>
<reference key="1">
    <citation type="journal article" date="2007" name="PLoS Genet.">
        <title>Patterns and implications of gene gain and loss in the evolution of Prochlorococcus.</title>
        <authorList>
            <person name="Kettler G.C."/>
            <person name="Martiny A.C."/>
            <person name="Huang K."/>
            <person name="Zucker J."/>
            <person name="Coleman M.L."/>
            <person name="Rodrigue S."/>
            <person name="Chen F."/>
            <person name="Lapidus A."/>
            <person name="Ferriera S."/>
            <person name="Johnson J."/>
            <person name="Steglich C."/>
            <person name="Church G.M."/>
            <person name="Richardson P."/>
            <person name="Chisholm S.W."/>
        </authorList>
    </citation>
    <scope>NUCLEOTIDE SEQUENCE [LARGE SCALE GENOMIC DNA]</scope>
    <source>
        <strain>MIT 9215</strain>
    </source>
</reference>
<name>YBEY_PROM2</name>
<protein>
    <recommendedName>
        <fullName evidence="1">Endoribonuclease YbeY</fullName>
        <ecNumber evidence="1">3.1.-.-</ecNumber>
    </recommendedName>
</protein>
<comment type="function">
    <text evidence="1">Single strand-specific metallo-endoribonuclease involved in late-stage 70S ribosome quality control and in maturation of the 3' terminus of the 16S rRNA.</text>
</comment>
<comment type="cofactor">
    <cofactor evidence="1">
        <name>Zn(2+)</name>
        <dbReference type="ChEBI" id="CHEBI:29105"/>
    </cofactor>
    <text evidence="1">Binds 1 zinc ion.</text>
</comment>
<comment type="subcellular location">
    <subcellularLocation>
        <location evidence="1">Cytoplasm</location>
    </subcellularLocation>
</comment>
<comment type="similarity">
    <text evidence="1">Belongs to the endoribonuclease YbeY family.</text>
</comment>
<sequence>MTEKIISEIILDLVFQCNDFSQFSNKLKDTKSKLIFESIFWEKVFLSWINIILKKKDYELPNYISEKKSFSLGLRIISNQEIASLNKKWMQKNGPTDVLSFPIISDESLNNLDHIELGDIFISLEMALEQSYEYKHTIYREMIWLASHGFLHLLGWEHNNENDLENMLNLQEYLITRLD</sequence>
<gene>
    <name evidence="1" type="primary">ybeY</name>
    <name type="ordered locus">P9215_02001</name>
</gene>
<keyword id="KW-0963">Cytoplasm</keyword>
<keyword id="KW-0255">Endonuclease</keyword>
<keyword id="KW-0378">Hydrolase</keyword>
<keyword id="KW-0479">Metal-binding</keyword>
<keyword id="KW-0540">Nuclease</keyword>
<keyword id="KW-0690">Ribosome biogenesis</keyword>
<keyword id="KW-0698">rRNA processing</keyword>
<keyword id="KW-0862">Zinc</keyword>
<dbReference type="EC" id="3.1.-.-" evidence="1"/>
<dbReference type="EMBL" id="CP000825">
    <property type="protein sequence ID" value="ABV49819.1"/>
    <property type="molecule type" value="Genomic_DNA"/>
</dbReference>
<dbReference type="RefSeq" id="WP_012006989.1">
    <property type="nucleotide sequence ID" value="NC_009840.1"/>
</dbReference>
<dbReference type="SMR" id="A8G2I8"/>
<dbReference type="STRING" id="93060.P9215_02001"/>
<dbReference type="KEGG" id="pmh:P9215_02001"/>
<dbReference type="eggNOG" id="COG0319">
    <property type="taxonomic scope" value="Bacteria"/>
</dbReference>
<dbReference type="HOGENOM" id="CLU_106710_3_0_3"/>
<dbReference type="OrthoDB" id="9807740at2"/>
<dbReference type="Proteomes" id="UP000002014">
    <property type="component" value="Chromosome"/>
</dbReference>
<dbReference type="GO" id="GO:0005737">
    <property type="term" value="C:cytoplasm"/>
    <property type="evidence" value="ECO:0007669"/>
    <property type="project" value="UniProtKB-SubCell"/>
</dbReference>
<dbReference type="GO" id="GO:0004222">
    <property type="term" value="F:metalloendopeptidase activity"/>
    <property type="evidence" value="ECO:0007669"/>
    <property type="project" value="InterPro"/>
</dbReference>
<dbReference type="GO" id="GO:0004521">
    <property type="term" value="F:RNA endonuclease activity"/>
    <property type="evidence" value="ECO:0007669"/>
    <property type="project" value="UniProtKB-UniRule"/>
</dbReference>
<dbReference type="GO" id="GO:0008270">
    <property type="term" value="F:zinc ion binding"/>
    <property type="evidence" value="ECO:0007669"/>
    <property type="project" value="UniProtKB-UniRule"/>
</dbReference>
<dbReference type="GO" id="GO:0006364">
    <property type="term" value="P:rRNA processing"/>
    <property type="evidence" value="ECO:0007669"/>
    <property type="project" value="UniProtKB-UniRule"/>
</dbReference>
<dbReference type="Gene3D" id="3.40.390.30">
    <property type="entry name" value="Metalloproteases ('zincins'), catalytic domain"/>
    <property type="match status" value="1"/>
</dbReference>
<dbReference type="HAMAP" id="MF_00009">
    <property type="entry name" value="Endoribonucl_YbeY"/>
    <property type="match status" value="1"/>
</dbReference>
<dbReference type="InterPro" id="IPR023091">
    <property type="entry name" value="MetalPrtase_cat_dom_sf_prd"/>
</dbReference>
<dbReference type="InterPro" id="IPR002036">
    <property type="entry name" value="YbeY"/>
</dbReference>
<dbReference type="InterPro" id="IPR020549">
    <property type="entry name" value="YbeY_CS"/>
</dbReference>
<dbReference type="NCBIfam" id="TIGR00043">
    <property type="entry name" value="rRNA maturation RNase YbeY"/>
    <property type="match status" value="1"/>
</dbReference>
<dbReference type="PANTHER" id="PTHR46986">
    <property type="entry name" value="ENDORIBONUCLEASE YBEY, CHLOROPLASTIC"/>
    <property type="match status" value="1"/>
</dbReference>
<dbReference type="PANTHER" id="PTHR46986:SF1">
    <property type="entry name" value="ENDORIBONUCLEASE YBEY, CHLOROPLASTIC"/>
    <property type="match status" value="1"/>
</dbReference>
<dbReference type="Pfam" id="PF02130">
    <property type="entry name" value="YbeY"/>
    <property type="match status" value="1"/>
</dbReference>
<dbReference type="SUPFAM" id="SSF55486">
    <property type="entry name" value="Metalloproteases ('zincins'), catalytic domain"/>
    <property type="match status" value="1"/>
</dbReference>
<dbReference type="PROSITE" id="PS01306">
    <property type="entry name" value="UPF0054"/>
    <property type="match status" value="1"/>
</dbReference>
<accession>A8G2I8</accession>
<evidence type="ECO:0000255" key="1">
    <source>
        <dbReference type="HAMAP-Rule" id="MF_00009"/>
    </source>
</evidence>